<protein>
    <recommendedName>
        <fullName evidence="3">Ketoreductase adrE</fullName>
        <ecNumber evidence="2">1.1.1.-</ecNumber>
    </recommendedName>
    <alternativeName>
        <fullName evidence="3">Andrastin A biosynthesis cluster protein E</fullName>
    </alternativeName>
</protein>
<reference key="1">
    <citation type="journal article" date="2008" name="Nat. Biotechnol.">
        <title>Genome sequencing and analysis of the filamentous fungus Penicillium chrysogenum.</title>
        <authorList>
            <person name="van den Berg M.A."/>
            <person name="Albang R."/>
            <person name="Albermann K."/>
            <person name="Badger J.H."/>
            <person name="Daran J.-M."/>
            <person name="Driessen A.J.M."/>
            <person name="Garcia-Estrada C."/>
            <person name="Fedorova N.D."/>
            <person name="Harris D.M."/>
            <person name="Heijne W.H.M."/>
            <person name="Joardar V.S."/>
            <person name="Kiel J.A.K.W."/>
            <person name="Kovalchuk A."/>
            <person name="Martin J.F."/>
            <person name="Nierman W.C."/>
            <person name="Nijland J.G."/>
            <person name="Pronk J.T."/>
            <person name="Roubos J.A."/>
            <person name="van der Klei I.J."/>
            <person name="van Peij N.N.M.E."/>
            <person name="Veenhuis M."/>
            <person name="von Doehren H."/>
            <person name="Wagner C."/>
            <person name="Wortman J.R."/>
            <person name="Bovenberg R.A.L."/>
        </authorList>
    </citation>
    <scope>NUCLEOTIDE SEQUENCE [LARGE SCALE GENOMIC DNA]</scope>
    <source>
        <strain>ATCC 28089 / DSM 1075 / NRRL 1951 / Wisconsin 54-1255</strain>
    </source>
</reference>
<reference key="2">
    <citation type="journal article" date="2013" name="Tetrahedron">
        <title>Reconstituted biosynthesis of fungal meroterpenoid andrastin A.</title>
        <authorList>
            <person name="Matsuda Y."/>
            <person name="Awakawa T."/>
            <person name="Abe I."/>
        </authorList>
    </citation>
    <scope>IDENTIFICATION</scope>
    <scope>FUNCTION</scope>
    <scope>CATALYTIC ACTIVITY</scope>
    <scope>PATHWAY</scope>
</reference>
<name>ADRE_PENRW</name>
<dbReference type="EC" id="1.1.1.-" evidence="2"/>
<dbReference type="EMBL" id="AM920437">
    <property type="protein sequence ID" value="CAP99574.1"/>
    <property type="molecule type" value="Genomic_DNA"/>
</dbReference>
<dbReference type="RefSeq" id="XP_002566180.1">
    <property type="nucleotide sequence ID" value="XM_002566134.1"/>
</dbReference>
<dbReference type="SMR" id="B6HV33"/>
<dbReference type="STRING" id="500485.B6HV33"/>
<dbReference type="GeneID" id="8309012"/>
<dbReference type="KEGG" id="pcs:N7525_004101"/>
<dbReference type="VEuPathDB" id="FungiDB:PCH_Pc22g22860"/>
<dbReference type="eggNOG" id="KOG1502">
    <property type="taxonomic scope" value="Eukaryota"/>
</dbReference>
<dbReference type="HOGENOM" id="CLU_007383_9_2_1"/>
<dbReference type="OMA" id="DECIRIK"/>
<dbReference type="OrthoDB" id="2735536at2759"/>
<dbReference type="BioCyc" id="PCHR:PC22G22860-MONOMER"/>
<dbReference type="UniPathway" id="UPA00213"/>
<dbReference type="Proteomes" id="UP000000724">
    <property type="component" value="Contig Pc00c22"/>
</dbReference>
<dbReference type="GO" id="GO:0016616">
    <property type="term" value="F:oxidoreductase activity, acting on the CH-OH group of donors, NAD or NADP as acceptor"/>
    <property type="evidence" value="ECO:0007669"/>
    <property type="project" value="TreeGrafter"/>
</dbReference>
<dbReference type="GO" id="GO:0016114">
    <property type="term" value="P:terpenoid biosynthetic process"/>
    <property type="evidence" value="ECO:0007669"/>
    <property type="project" value="UniProtKB-UniPathway"/>
</dbReference>
<dbReference type="Gene3D" id="3.40.50.720">
    <property type="entry name" value="NAD(P)-binding Rossmann-like Domain"/>
    <property type="match status" value="1"/>
</dbReference>
<dbReference type="InterPro" id="IPR001509">
    <property type="entry name" value="Epimerase_deHydtase"/>
</dbReference>
<dbReference type="InterPro" id="IPR036291">
    <property type="entry name" value="NAD(P)-bd_dom_sf"/>
</dbReference>
<dbReference type="InterPro" id="IPR050425">
    <property type="entry name" value="NAD(P)_dehydrat-like"/>
</dbReference>
<dbReference type="PANTHER" id="PTHR10366:SF562">
    <property type="entry name" value="ALDEHYDE REDUCTASE II (AFU_ORTHOLOGUE AFUA_1G11360)"/>
    <property type="match status" value="1"/>
</dbReference>
<dbReference type="PANTHER" id="PTHR10366">
    <property type="entry name" value="NAD DEPENDENT EPIMERASE/DEHYDRATASE"/>
    <property type="match status" value="1"/>
</dbReference>
<dbReference type="Pfam" id="PF01370">
    <property type="entry name" value="Epimerase"/>
    <property type="match status" value="1"/>
</dbReference>
<dbReference type="SUPFAM" id="SSF51735">
    <property type="entry name" value="NAD(P)-binding Rossmann-fold domains"/>
    <property type="match status" value="1"/>
</dbReference>
<feature type="chain" id="PRO_0000446476" description="Ketoreductase adrE">
    <location>
        <begin position="1"/>
        <end position="336"/>
    </location>
</feature>
<feature type="binding site" evidence="1">
    <location>
        <position position="171"/>
    </location>
    <ligand>
        <name>NADP(+)</name>
        <dbReference type="ChEBI" id="CHEBI:58349"/>
    </ligand>
</feature>
<keyword id="KW-0560">Oxidoreductase</keyword>
<keyword id="KW-1185">Reference proteome</keyword>
<organism>
    <name type="scientific">Penicillium rubens (strain ATCC 28089 / DSM 1075 / NRRL 1951 / Wisconsin 54-1255)</name>
    <name type="common">Penicillium chrysogenum</name>
    <dbReference type="NCBI Taxonomy" id="500485"/>
    <lineage>
        <taxon>Eukaryota</taxon>
        <taxon>Fungi</taxon>
        <taxon>Dikarya</taxon>
        <taxon>Ascomycota</taxon>
        <taxon>Pezizomycotina</taxon>
        <taxon>Eurotiomycetes</taxon>
        <taxon>Eurotiomycetidae</taxon>
        <taxon>Eurotiales</taxon>
        <taxon>Aspergillaceae</taxon>
        <taxon>Penicillium</taxon>
        <taxon>Penicillium chrysogenum species complex</taxon>
    </lineage>
</organism>
<evidence type="ECO:0000250" key="1">
    <source>
        <dbReference type="UniProtKB" id="A0A059TC02"/>
    </source>
</evidence>
<evidence type="ECO:0000269" key="2">
    <source ref="2"/>
</evidence>
<evidence type="ECO:0000303" key="3">
    <source ref="2"/>
</evidence>
<evidence type="ECO:0000305" key="4"/>
<accession>B6HV33</accession>
<proteinExistence type="evidence at protein level"/>
<comment type="function">
    <text evidence="2">Ketoreductase; part of the gene cluster that mediates the biosynthesis of andrastins, meroterpenoid compounds that exhibit inhibitory activity against ras farnesyltransferase, suggesting that they could be promising leads for antitumor agents (Ref.2). The first step of the pathway is the synthesis of 3,5-dimethylorsellinic acid (DMOA) by the polyketide synthase adrD via condensation of one acetyl-CoA starter unit with 3 malonyl-CoA units and 2 methylations (Ref.2). DMAO is then converted to farnesyl-DMAO by the prenyltransferase adrG (Ref.2). The methyltransferase adrK catalyzes the methylation of the carboxyl group of farnesyl-DMAO to farnesyl-DMAO methyl ester which is further converted to epoxyfarnesyl-DMAO methyl ester by the FAD-dependent monooxygenase adrH (Ref.2). The terpene cyclase adrI then catalyzes the carbon skeletal rearrangement to generate the andrastin E, the first compound in the pathway having the andrastin scaffold, with the tetracyclic ring system (Ref.2). The post-cyclization tailoring enzymes adrF, adrE, adrJ, and adrA, are involved in the conversion of andrastin E into andrastin A. The short chain dehydrogenase adrF is responsible for the oxidation of the C-3 a hydroxyl group of andrastin E to yield the corresponding ketone, andrastin D. The ketoreductase adrE stereoselectively reduces the carbonyl moiety to reverse the stereochemistry of the C-3 position to yield andrastin F. The acetyltransferase adrJ is the acetyltransferase that attaches the acetyl group to the C-3 hydroxyl group of andrastin F to yield andrastin C. Finally, the cytochrome P450 monooxygenase adrA catalyzes two sequential oxidation reactions of the C-23 methyl group, to generate the corresponding alcohol andrastin B, and aldehyde andrastin A (Ref.2).</text>
</comment>
<comment type="pathway">
    <text evidence="2">Secondary metabolite biosynthesis; terpenoid biosynthesis.</text>
</comment>
<comment type="similarity">
    <text evidence="4">Belongs to the NAD(P)-dependent epimerase/dehydratase family. Dihydroflavonol-4-reductase subfamily.</text>
</comment>
<sequence>MTQAQNHIVPPGSKVLVTGANGYIASHIIKVLLDLGYLVQGTVRTPMPWLTEYFEKRYGSGRFELIVVSDFQQSDAFDESVKGVSGVIHVAQGLPSSTAAETVESATAYTVNGVVNLLKAASTKPTIKRVVLTSSIVAAGYPAGKGFKLDVDTWDKSLEQASKGGTTVPIYRACKVEGERQAWKWVEKNQPHFELNTVLPWLTLGKILHPNIGGSTMGYVSGLLKGDTTPFKFLPLPWFVDVEDTARLHAIALISPSVRSERLFAAATPFIWGDVIEILKRIQPNNARIPAAPVKEEPTIGDIVPAARAEKLLRETFGQRGWTPLEVSLEGGIARE</sequence>
<gene>
    <name evidence="3" type="primary">adrE</name>
    <name type="ORF">Pc22g22860</name>
</gene>